<evidence type="ECO:0000255" key="1">
    <source>
        <dbReference type="HAMAP-Rule" id="MF_01046"/>
    </source>
</evidence>
<organism>
    <name type="scientific">Shigella boydii serotype 18 (strain CDC 3083-94 / BS512)</name>
    <dbReference type="NCBI Taxonomy" id="344609"/>
    <lineage>
        <taxon>Bacteria</taxon>
        <taxon>Pseudomonadati</taxon>
        <taxon>Pseudomonadota</taxon>
        <taxon>Gammaproteobacteria</taxon>
        <taxon>Enterobacterales</taxon>
        <taxon>Enterobacteriaceae</taxon>
        <taxon>Shigella</taxon>
    </lineage>
</organism>
<sequence>MTVQTSKNPQVDIAEDNAFFPSEYSLSQYTSPVSDLDGVDYPKPYRGKHKILVIAADERYLPTDNGKLFSTGNHPIETLLPLYHLHAAGFEFEVATISGLMTKFEYWAMPHKDEKVMPFFEQHKSLFRNPKKLADVVASLNADSEYAAIFVPGGHGALIGLPESQDVAAALQWAIKNDRFVISLCHGPAAFLALRHGDNPLNGYSICAFPDAADKQTPEIGYMPGHLTWYFGEELKKMGMNIINDDITGRVHKDRKVLTGDSPFAANALGKLAAQEMLAAYAG</sequence>
<proteinExistence type="inferred from homology"/>
<name>HCHA_SHIB3</name>
<comment type="function">
    <text evidence="1">Protein and nucleotide deglycase that catalyzes the deglycation of the Maillard adducts formed between amino groups of proteins or nucleotides and reactive carbonyl groups of glyoxals. Thus, functions as a protein deglycase that repairs methylglyoxal- and glyoxal-glycated proteins, and releases repaired proteins and lactate or glycolate, respectively. Deglycates cysteine, arginine and lysine residues in proteins, and thus reactivates these proteins by reversing glycation by glyoxals. Acts on early glycation intermediates (hemithioacetals and aminocarbinols), preventing the formation of Schiff bases and advanced glycation endproducts (AGE). Also functions as a nucleotide deglycase able to repair glycated guanine in the free nucleotide pool (GTP, GDP, GMP, dGTP) and in DNA and RNA. Is thus involved in a major nucleotide repair system named guanine glycation repair (GG repair), dedicated to reversing methylglyoxal and glyoxal damage via nucleotide sanitization and direct nucleic acid repair. Plays an important role in protecting cells from carbonyl stress.</text>
</comment>
<comment type="catalytic activity">
    <reaction evidence="1">
        <text>N(omega)-(1-hydroxy-2-oxopropyl)-L-arginyl-[protein] + H2O = lactate + L-arginyl-[protein] + H(+)</text>
        <dbReference type="Rhea" id="RHEA:49548"/>
        <dbReference type="Rhea" id="RHEA-COMP:10532"/>
        <dbReference type="Rhea" id="RHEA-COMP:12428"/>
        <dbReference type="ChEBI" id="CHEBI:15377"/>
        <dbReference type="ChEBI" id="CHEBI:15378"/>
        <dbReference type="ChEBI" id="CHEBI:24996"/>
        <dbReference type="ChEBI" id="CHEBI:29965"/>
        <dbReference type="ChEBI" id="CHEBI:131708"/>
        <dbReference type="EC" id="3.5.1.124"/>
    </reaction>
</comment>
<comment type="catalytic activity">
    <reaction evidence="1">
        <text>N(6)-(1-hydroxy-2-oxopropyl)-L-lysyl-[protein] + H2O = lactate + L-lysyl-[protein] + H(+)</text>
        <dbReference type="Rhea" id="RHEA:49552"/>
        <dbReference type="Rhea" id="RHEA-COMP:9752"/>
        <dbReference type="Rhea" id="RHEA-COMP:12429"/>
        <dbReference type="ChEBI" id="CHEBI:15377"/>
        <dbReference type="ChEBI" id="CHEBI:15378"/>
        <dbReference type="ChEBI" id="CHEBI:24996"/>
        <dbReference type="ChEBI" id="CHEBI:29969"/>
        <dbReference type="ChEBI" id="CHEBI:131709"/>
        <dbReference type="EC" id="3.5.1.124"/>
    </reaction>
</comment>
<comment type="catalytic activity">
    <reaction evidence="1">
        <text>S-(1-hydroxy-2-oxopropyl)-L-cysteinyl-[protein] + H2O = lactate + L-cysteinyl-[protein] + H(+)</text>
        <dbReference type="Rhea" id="RHEA:49556"/>
        <dbReference type="Rhea" id="RHEA-COMP:10131"/>
        <dbReference type="Rhea" id="RHEA-COMP:12430"/>
        <dbReference type="ChEBI" id="CHEBI:15377"/>
        <dbReference type="ChEBI" id="CHEBI:15378"/>
        <dbReference type="ChEBI" id="CHEBI:24996"/>
        <dbReference type="ChEBI" id="CHEBI:29950"/>
        <dbReference type="ChEBI" id="CHEBI:131710"/>
        <dbReference type="EC" id="3.5.1.124"/>
    </reaction>
</comment>
<comment type="catalytic activity">
    <reaction evidence="1">
        <text>N(omega)-(1-hydroxy-2-oxoethyl)-L-arginyl-[protein] + H2O = L-arginyl-[protein] + glycolate + H(+)</text>
        <dbReference type="Rhea" id="RHEA:57188"/>
        <dbReference type="Rhea" id="RHEA-COMP:10532"/>
        <dbReference type="Rhea" id="RHEA-COMP:14844"/>
        <dbReference type="ChEBI" id="CHEBI:15377"/>
        <dbReference type="ChEBI" id="CHEBI:15378"/>
        <dbReference type="ChEBI" id="CHEBI:29805"/>
        <dbReference type="ChEBI" id="CHEBI:29965"/>
        <dbReference type="ChEBI" id="CHEBI:141553"/>
        <dbReference type="EC" id="3.5.1.124"/>
    </reaction>
</comment>
<comment type="catalytic activity">
    <reaction evidence="1">
        <text>N(6)-(1-hydroxy-2-oxoethyl)-L-lysyl-[protein] + H2O = glycolate + L-lysyl-[protein] + H(+)</text>
        <dbReference type="Rhea" id="RHEA:57192"/>
        <dbReference type="Rhea" id="RHEA-COMP:9752"/>
        <dbReference type="Rhea" id="RHEA-COMP:14845"/>
        <dbReference type="ChEBI" id="CHEBI:15377"/>
        <dbReference type="ChEBI" id="CHEBI:15378"/>
        <dbReference type="ChEBI" id="CHEBI:29805"/>
        <dbReference type="ChEBI" id="CHEBI:29969"/>
        <dbReference type="ChEBI" id="CHEBI:141554"/>
        <dbReference type="EC" id="3.5.1.124"/>
    </reaction>
</comment>
<comment type="catalytic activity">
    <reaction evidence="1">
        <text>S-(1-hydroxy-2-oxoethyl)-L-cysteinyl-[protein] + H2O = glycolate + L-cysteinyl-[protein] + H(+)</text>
        <dbReference type="Rhea" id="RHEA:57196"/>
        <dbReference type="Rhea" id="RHEA-COMP:10131"/>
        <dbReference type="Rhea" id="RHEA-COMP:14846"/>
        <dbReference type="ChEBI" id="CHEBI:15377"/>
        <dbReference type="ChEBI" id="CHEBI:15378"/>
        <dbReference type="ChEBI" id="CHEBI:29805"/>
        <dbReference type="ChEBI" id="CHEBI:29950"/>
        <dbReference type="ChEBI" id="CHEBI:141555"/>
        <dbReference type="EC" id="3.5.1.124"/>
    </reaction>
</comment>
<comment type="catalytic activity">
    <reaction evidence="1">
        <text>N(2)-(1-hydroxy-2-oxopropyl)-dGTP + H2O = lactate + dGTP + H(+)</text>
        <dbReference type="Rhea" id="RHEA:57244"/>
        <dbReference type="ChEBI" id="CHEBI:15377"/>
        <dbReference type="ChEBI" id="CHEBI:15378"/>
        <dbReference type="ChEBI" id="CHEBI:24996"/>
        <dbReference type="ChEBI" id="CHEBI:61429"/>
        <dbReference type="ChEBI" id="CHEBI:141569"/>
    </reaction>
</comment>
<comment type="catalytic activity">
    <reaction evidence="1">
        <text>N(2)-(1-hydroxy-2-oxopropyl)-GTP + H2O = lactate + GTP + H(+)</text>
        <dbReference type="Rhea" id="RHEA:57256"/>
        <dbReference type="ChEBI" id="CHEBI:15377"/>
        <dbReference type="ChEBI" id="CHEBI:15378"/>
        <dbReference type="ChEBI" id="CHEBI:24996"/>
        <dbReference type="ChEBI" id="CHEBI:37565"/>
        <dbReference type="ChEBI" id="CHEBI:141570"/>
    </reaction>
</comment>
<comment type="catalytic activity">
    <reaction evidence="1">
        <text>N(2)-(1-hydroxy-2-oxopropyl)-GDP + H2O = lactate + GDP + H(+)</text>
        <dbReference type="Rhea" id="RHEA:57260"/>
        <dbReference type="ChEBI" id="CHEBI:15377"/>
        <dbReference type="ChEBI" id="CHEBI:15378"/>
        <dbReference type="ChEBI" id="CHEBI:24996"/>
        <dbReference type="ChEBI" id="CHEBI:58189"/>
        <dbReference type="ChEBI" id="CHEBI:141573"/>
    </reaction>
</comment>
<comment type="catalytic activity">
    <reaction evidence="1">
        <text>N(2)-(1-hydroxy-2-oxopropyl)-GMP + H2O = lactate + GMP + H(+)</text>
        <dbReference type="Rhea" id="RHEA:57268"/>
        <dbReference type="ChEBI" id="CHEBI:15377"/>
        <dbReference type="ChEBI" id="CHEBI:15378"/>
        <dbReference type="ChEBI" id="CHEBI:24996"/>
        <dbReference type="ChEBI" id="CHEBI:58115"/>
        <dbReference type="ChEBI" id="CHEBI:141575"/>
    </reaction>
</comment>
<comment type="catalytic activity">
    <reaction evidence="1">
        <text>N(2)-(1-hydroxy-2-oxoethyl)-dGTP + H2O = dGTP + glycolate + H(+)</text>
        <dbReference type="Rhea" id="RHEA:57248"/>
        <dbReference type="ChEBI" id="CHEBI:15377"/>
        <dbReference type="ChEBI" id="CHEBI:15378"/>
        <dbReference type="ChEBI" id="CHEBI:29805"/>
        <dbReference type="ChEBI" id="CHEBI:61429"/>
        <dbReference type="ChEBI" id="CHEBI:141572"/>
    </reaction>
</comment>
<comment type="catalytic activity">
    <reaction evidence="1">
        <text>N(2)-(1-hydroxy-2-oxoethyl)-GTP + H2O = glycolate + GTP + H(+)</text>
        <dbReference type="Rhea" id="RHEA:57252"/>
        <dbReference type="ChEBI" id="CHEBI:15377"/>
        <dbReference type="ChEBI" id="CHEBI:15378"/>
        <dbReference type="ChEBI" id="CHEBI:29805"/>
        <dbReference type="ChEBI" id="CHEBI:37565"/>
        <dbReference type="ChEBI" id="CHEBI:141571"/>
    </reaction>
</comment>
<comment type="catalytic activity">
    <reaction evidence="1">
        <text>N(2)-(1-hydroxy-2-oxoethyl)-GDP + H2O = glycolate + GDP + H(+)</text>
        <dbReference type="Rhea" id="RHEA:57264"/>
        <dbReference type="ChEBI" id="CHEBI:15377"/>
        <dbReference type="ChEBI" id="CHEBI:15378"/>
        <dbReference type="ChEBI" id="CHEBI:29805"/>
        <dbReference type="ChEBI" id="CHEBI:58189"/>
        <dbReference type="ChEBI" id="CHEBI:141574"/>
    </reaction>
</comment>
<comment type="catalytic activity">
    <reaction evidence="1">
        <text>N(2)-(1-hydroxy-2-oxoethyl)-GMP + H2O = glycolate + GMP + H(+)</text>
        <dbReference type="Rhea" id="RHEA:57304"/>
        <dbReference type="ChEBI" id="CHEBI:15377"/>
        <dbReference type="ChEBI" id="CHEBI:15378"/>
        <dbReference type="ChEBI" id="CHEBI:29805"/>
        <dbReference type="ChEBI" id="CHEBI:58115"/>
        <dbReference type="ChEBI" id="CHEBI:141576"/>
    </reaction>
</comment>
<comment type="catalytic activity">
    <reaction evidence="1">
        <text>an N(2)-(1-hydroxy-2-oxopropyl)-guanosine in RNA + H2O = a guanosine in RNA + lactate + H(+)</text>
        <dbReference type="Rhea" id="RHEA:57288"/>
        <dbReference type="Rhea" id="RHEA-COMP:14855"/>
        <dbReference type="Rhea" id="RHEA-COMP:14858"/>
        <dbReference type="ChEBI" id="CHEBI:15377"/>
        <dbReference type="ChEBI" id="CHEBI:15378"/>
        <dbReference type="ChEBI" id="CHEBI:24996"/>
        <dbReference type="ChEBI" id="CHEBI:74269"/>
        <dbReference type="ChEBI" id="CHEBI:141580"/>
    </reaction>
</comment>
<comment type="catalytic activity">
    <reaction evidence="1">
        <text>an N(2)-(1-hydroxy-2-oxopropyl)-2'-deoxyguanosine in DNA + H2O = a 2'-deoxyguanosine in DNA + lactate + H(+)</text>
        <dbReference type="Rhea" id="RHEA:57300"/>
        <dbReference type="Rhea" id="RHEA-COMP:11367"/>
        <dbReference type="Rhea" id="RHEA-COMP:14856"/>
        <dbReference type="ChEBI" id="CHEBI:15377"/>
        <dbReference type="ChEBI" id="CHEBI:15378"/>
        <dbReference type="ChEBI" id="CHEBI:24996"/>
        <dbReference type="ChEBI" id="CHEBI:85445"/>
        <dbReference type="ChEBI" id="CHEBI:141578"/>
    </reaction>
</comment>
<comment type="catalytic activity">
    <reaction evidence="1">
        <text>an N(2)-(1-hydroxy-2-oxoethyl)-guanosine in RNA + H2O = a guanosine in RNA + glycolate + H(+)</text>
        <dbReference type="Rhea" id="RHEA:57292"/>
        <dbReference type="Rhea" id="RHEA-COMP:14855"/>
        <dbReference type="Rhea" id="RHEA-COMP:14859"/>
        <dbReference type="ChEBI" id="CHEBI:15377"/>
        <dbReference type="ChEBI" id="CHEBI:15378"/>
        <dbReference type="ChEBI" id="CHEBI:29805"/>
        <dbReference type="ChEBI" id="CHEBI:74269"/>
        <dbReference type="ChEBI" id="CHEBI:141581"/>
    </reaction>
</comment>
<comment type="catalytic activity">
    <reaction evidence="1">
        <text>an N(2)-(1-hydroxy-2-oxoethyl)-2'-deoxyguanosine in DNA + H2O = a 2'-deoxyguanosine in DNA + glycolate + H(+)</text>
        <dbReference type="Rhea" id="RHEA:57296"/>
        <dbReference type="Rhea" id="RHEA-COMP:11367"/>
        <dbReference type="Rhea" id="RHEA-COMP:14857"/>
        <dbReference type="ChEBI" id="CHEBI:15377"/>
        <dbReference type="ChEBI" id="CHEBI:15378"/>
        <dbReference type="ChEBI" id="CHEBI:29805"/>
        <dbReference type="ChEBI" id="CHEBI:85445"/>
        <dbReference type="ChEBI" id="CHEBI:141579"/>
    </reaction>
</comment>
<comment type="subunit">
    <text evidence="1">Homodimer.</text>
</comment>
<comment type="subcellular location">
    <subcellularLocation>
        <location evidence="1">Cytoplasm</location>
    </subcellularLocation>
</comment>
<comment type="induction">
    <text evidence="1">By heat shock.</text>
</comment>
<comment type="similarity">
    <text evidence="1">Belongs to the peptidase C56 family. HchA subfamily.</text>
</comment>
<accession>B2TWL8</accession>
<feature type="chain" id="PRO_1000136183" description="Protein/nucleic acid deglycase HchA">
    <location>
        <begin position="1"/>
        <end position="283"/>
    </location>
</feature>
<feature type="active site" description="Nucleophile" evidence="1">
    <location>
        <position position="185"/>
    </location>
</feature>
<feature type="binding site" evidence="1">
    <location>
        <position position="86"/>
    </location>
    <ligand>
        <name>Zn(2+)</name>
        <dbReference type="ChEBI" id="CHEBI:29105"/>
    </ligand>
</feature>
<feature type="binding site" evidence="1">
    <location>
        <position position="91"/>
    </location>
    <ligand>
        <name>Zn(2+)</name>
        <dbReference type="ChEBI" id="CHEBI:29105"/>
    </ligand>
</feature>
<feature type="binding site" evidence="1">
    <location>
        <position position="123"/>
    </location>
    <ligand>
        <name>Zn(2+)</name>
        <dbReference type="ChEBI" id="CHEBI:29105"/>
    </ligand>
</feature>
<dbReference type="EC" id="3.1.2.-" evidence="1"/>
<dbReference type="EC" id="3.5.1.-" evidence="1"/>
<dbReference type="EC" id="3.5.1.124" evidence="1"/>
<dbReference type="EMBL" id="CP001063">
    <property type="protein sequence ID" value="ACD08859.1"/>
    <property type="molecule type" value="Genomic_DNA"/>
</dbReference>
<dbReference type="RefSeq" id="WP_000218214.1">
    <property type="nucleotide sequence ID" value="NC_010658.1"/>
</dbReference>
<dbReference type="SMR" id="B2TWL8"/>
<dbReference type="STRING" id="344609.SbBS512_E0916"/>
<dbReference type="MEROPS" id="C56.006"/>
<dbReference type="GeneID" id="75205795"/>
<dbReference type="KEGG" id="sbc:SbBS512_E0916"/>
<dbReference type="HOGENOM" id="CLU_066933_0_0_6"/>
<dbReference type="Proteomes" id="UP000001030">
    <property type="component" value="Chromosome"/>
</dbReference>
<dbReference type="GO" id="GO:0005737">
    <property type="term" value="C:cytoplasm"/>
    <property type="evidence" value="ECO:0007669"/>
    <property type="project" value="UniProtKB-SubCell"/>
</dbReference>
<dbReference type="GO" id="GO:0019172">
    <property type="term" value="F:glyoxalase III activity"/>
    <property type="evidence" value="ECO:0007669"/>
    <property type="project" value="TreeGrafter"/>
</dbReference>
<dbReference type="GO" id="GO:0036524">
    <property type="term" value="F:protein deglycase activity"/>
    <property type="evidence" value="ECO:0007669"/>
    <property type="project" value="UniProtKB-UniRule"/>
</dbReference>
<dbReference type="GO" id="GO:0016790">
    <property type="term" value="F:thiolester hydrolase activity"/>
    <property type="evidence" value="ECO:0007669"/>
    <property type="project" value="UniProtKB-UniRule"/>
</dbReference>
<dbReference type="GO" id="GO:0008270">
    <property type="term" value="F:zinc ion binding"/>
    <property type="evidence" value="ECO:0007669"/>
    <property type="project" value="UniProtKB-UniRule"/>
</dbReference>
<dbReference type="GO" id="GO:0006281">
    <property type="term" value="P:DNA repair"/>
    <property type="evidence" value="ECO:0007669"/>
    <property type="project" value="UniProtKB-UniRule"/>
</dbReference>
<dbReference type="GO" id="GO:0019243">
    <property type="term" value="P:methylglyoxal catabolic process to D-lactate via S-lactoyl-glutathione"/>
    <property type="evidence" value="ECO:0007669"/>
    <property type="project" value="TreeGrafter"/>
</dbReference>
<dbReference type="GO" id="GO:0030091">
    <property type="term" value="P:protein repair"/>
    <property type="evidence" value="ECO:0007669"/>
    <property type="project" value="UniProtKB-UniRule"/>
</dbReference>
<dbReference type="FunFam" id="3.40.50.880:FF:000026">
    <property type="entry name" value="Protein/nucleic acid deglycase HchA"/>
    <property type="match status" value="1"/>
</dbReference>
<dbReference type="Gene3D" id="3.40.50.880">
    <property type="match status" value="1"/>
</dbReference>
<dbReference type="HAMAP" id="MF_01046">
    <property type="entry name" value="Deglycase_HchA"/>
    <property type="match status" value="1"/>
</dbReference>
<dbReference type="InterPro" id="IPR029062">
    <property type="entry name" value="Class_I_gatase-like"/>
</dbReference>
<dbReference type="InterPro" id="IPR017283">
    <property type="entry name" value="HchA"/>
</dbReference>
<dbReference type="InterPro" id="IPR050325">
    <property type="entry name" value="Prot/Nucl_acid_deglycase"/>
</dbReference>
<dbReference type="NCBIfam" id="NF003168">
    <property type="entry name" value="PRK04155.1"/>
    <property type="match status" value="1"/>
</dbReference>
<dbReference type="PANTHER" id="PTHR48094">
    <property type="entry name" value="PROTEIN/NUCLEIC ACID DEGLYCASE DJ-1-RELATED"/>
    <property type="match status" value="1"/>
</dbReference>
<dbReference type="PANTHER" id="PTHR48094:SF20">
    <property type="entry name" value="PROTEIN_NUCLEIC ACID DEGLYCASE 1"/>
    <property type="match status" value="1"/>
</dbReference>
<dbReference type="PIRSF" id="PIRSF037798">
    <property type="entry name" value="Chaperone_HchA"/>
    <property type="match status" value="1"/>
</dbReference>
<dbReference type="SUPFAM" id="SSF52317">
    <property type="entry name" value="Class I glutamine amidotransferase-like"/>
    <property type="match status" value="1"/>
</dbReference>
<protein>
    <recommendedName>
        <fullName evidence="1">Protein/nucleic acid deglycase HchA</fullName>
        <ecNumber evidence="1">3.1.2.-</ecNumber>
        <ecNumber evidence="1">3.5.1.-</ecNumber>
        <ecNumber evidence="1">3.5.1.124</ecNumber>
    </recommendedName>
    <alternativeName>
        <fullName evidence="1">Maillard deglycase</fullName>
    </alternativeName>
</protein>
<keyword id="KW-0963">Cytoplasm</keyword>
<keyword id="KW-0227">DNA damage</keyword>
<keyword id="KW-0234">DNA repair</keyword>
<keyword id="KW-0378">Hydrolase</keyword>
<keyword id="KW-0479">Metal-binding</keyword>
<keyword id="KW-1185">Reference proteome</keyword>
<keyword id="KW-0346">Stress response</keyword>
<keyword id="KW-0862">Zinc</keyword>
<reference key="1">
    <citation type="submission" date="2008-05" db="EMBL/GenBank/DDBJ databases">
        <title>Complete sequence of Shigella boydii serotype 18 strain BS512.</title>
        <authorList>
            <person name="Rasko D.A."/>
            <person name="Rosovitz M."/>
            <person name="Maurelli A.T."/>
            <person name="Myers G."/>
            <person name="Seshadri R."/>
            <person name="Cer R."/>
            <person name="Jiang L."/>
            <person name="Ravel J."/>
            <person name="Sebastian Y."/>
        </authorList>
    </citation>
    <scope>NUCLEOTIDE SEQUENCE [LARGE SCALE GENOMIC DNA]</scope>
    <source>
        <strain>CDC 3083-94 / BS512</strain>
    </source>
</reference>
<gene>
    <name evidence="1" type="primary">hchA</name>
    <name type="ordered locus">SbBS512_E0916</name>
</gene>